<keyword id="KW-0235">DNA replication</keyword>
<keyword id="KW-0238">DNA-binding</keyword>
<keyword id="KW-0639">Primosome</keyword>
<gene>
    <name evidence="1" type="primary">priB</name>
    <name type="ordered locus">HS_1437</name>
</gene>
<dbReference type="EMBL" id="CP000436">
    <property type="protein sequence ID" value="ABI25712.1"/>
    <property type="molecule type" value="Genomic_DNA"/>
</dbReference>
<dbReference type="SMR" id="Q0I4E6"/>
<dbReference type="KEGG" id="hso:HS_1437"/>
<dbReference type="eggNOG" id="COG2965">
    <property type="taxonomic scope" value="Bacteria"/>
</dbReference>
<dbReference type="HOGENOM" id="CLU_166075_0_0_6"/>
<dbReference type="GO" id="GO:1990077">
    <property type="term" value="C:primosome complex"/>
    <property type="evidence" value="ECO:0007669"/>
    <property type="project" value="UniProtKB-KW"/>
</dbReference>
<dbReference type="GO" id="GO:0003697">
    <property type="term" value="F:single-stranded DNA binding"/>
    <property type="evidence" value="ECO:0007669"/>
    <property type="project" value="UniProtKB-UniRule"/>
</dbReference>
<dbReference type="GO" id="GO:0006269">
    <property type="term" value="P:DNA replication, synthesis of primer"/>
    <property type="evidence" value="ECO:0007669"/>
    <property type="project" value="UniProtKB-KW"/>
</dbReference>
<dbReference type="Gene3D" id="2.40.50.140">
    <property type="entry name" value="Nucleic acid-binding proteins"/>
    <property type="match status" value="1"/>
</dbReference>
<dbReference type="HAMAP" id="MF_00720">
    <property type="entry name" value="PriB"/>
    <property type="match status" value="1"/>
</dbReference>
<dbReference type="InterPro" id="IPR012340">
    <property type="entry name" value="NA-bd_OB-fold"/>
</dbReference>
<dbReference type="InterPro" id="IPR000424">
    <property type="entry name" value="Primosome_PriB/ssb"/>
</dbReference>
<dbReference type="InterPro" id="IPR023646">
    <property type="entry name" value="Prisomal_replication_PriB"/>
</dbReference>
<dbReference type="NCBIfam" id="TIGR04418">
    <property type="entry name" value="PriB_gamma"/>
    <property type="match status" value="1"/>
</dbReference>
<dbReference type="Pfam" id="PF22657">
    <property type="entry name" value="SSB_1"/>
    <property type="match status" value="1"/>
</dbReference>
<dbReference type="PIRSF" id="PIRSF003135">
    <property type="entry name" value="Primosomal_n"/>
    <property type="match status" value="1"/>
</dbReference>
<dbReference type="SUPFAM" id="SSF50249">
    <property type="entry name" value="Nucleic acid-binding proteins"/>
    <property type="match status" value="1"/>
</dbReference>
<dbReference type="PROSITE" id="PS50935">
    <property type="entry name" value="SSB"/>
    <property type="match status" value="1"/>
</dbReference>
<comment type="function">
    <text evidence="1">Involved in the restart of stalled replication forks, which reloads the replicative helicase on sites other than the origin of replication; the PriA-PriB pathway is the major replication restart pathway. During primosome assembly it facilitates complex formation between PriA and DnaT on DNA; stabilizes PriA on DNA. Stimulates the DNA unwinding activity of PriA helicase.</text>
</comment>
<comment type="subunit">
    <text evidence="1">Homodimer. Interacts with PriA and DnaT. Component of the replication restart primosome. Primosome assembly occurs via a 'hand-off' mechanism. PriA binds to replication forks, subsequently PriB then DnaT bind; DnaT then displaces ssDNA to generate the helicase loading substrate.</text>
</comment>
<comment type="similarity">
    <text evidence="1">Belongs to the PriB family.</text>
</comment>
<accession>Q0I4E6</accession>
<organism>
    <name type="scientific">Histophilus somni (strain 129Pt)</name>
    <name type="common">Haemophilus somnus</name>
    <dbReference type="NCBI Taxonomy" id="205914"/>
    <lineage>
        <taxon>Bacteria</taxon>
        <taxon>Pseudomonadati</taxon>
        <taxon>Pseudomonadota</taxon>
        <taxon>Gammaproteobacteria</taxon>
        <taxon>Pasteurellales</taxon>
        <taxon>Pasteurellaceae</taxon>
        <taxon>Histophilus</taxon>
    </lineage>
</organism>
<feature type="chain" id="PRO_1000083283" description="Replication restart protein PriB">
    <location>
        <begin position="1"/>
        <end position="108"/>
    </location>
</feature>
<feature type="domain" description="SSB" evidence="1">
    <location>
        <begin position="8"/>
        <end position="108"/>
    </location>
</feature>
<sequence>MLKSNLEVDNRFSLIGKVADFPKRNKSPSGIDHCLFYLEHRSNKKEAGFTRQAWCKIAIQISGNQLIEKTQSITVGQQLLVVGFVTSHRSSNGLNQLVLHAEQIEFIE</sequence>
<proteinExistence type="inferred from homology"/>
<name>PRIB_HISS1</name>
<evidence type="ECO:0000255" key="1">
    <source>
        <dbReference type="HAMAP-Rule" id="MF_00720"/>
    </source>
</evidence>
<reference key="1">
    <citation type="journal article" date="2007" name="J. Bacteriol.">
        <title>Complete genome sequence of Haemophilus somnus (Histophilus somni) strain 129Pt and comparison to Haemophilus ducreyi 35000HP and Haemophilus influenzae Rd.</title>
        <authorList>
            <person name="Challacombe J.F."/>
            <person name="Duncan A.J."/>
            <person name="Brettin T.S."/>
            <person name="Bruce D."/>
            <person name="Chertkov O."/>
            <person name="Detter J.C."/>
            <person name="Han C.S."/>
            <person name="Misra M."/>
            <person name="Richardson P."/>
            <person name="Tapia R."/>
            <person name="Thayer N."/>
            <person name="Xie G."/>
            <person name="Inzana T.J."/>
        </authorList>
    </citation>
    <scope>NUCLEOTIDE SEQUENCE [LARGE SCALE GENOMIC DNA]</scope>
    <source>
        <strain>129Pt</strain>
    </source>
</reference>
<protein>
    <recommendedName>
        <fullName evidence="1">Replication restart protein PriB</fullName>
    </recommendedName>
</protein>